<name>DEGP8_ARATH</name>
<organism>
    <name type="scientific">Arabidopsis thaliana</name>
    <name type="common">Mouse-ear cress</name>
    <dbReference type="NCBI Taxonomy" id="3702"/>
    <lineage>
        <taxon>Eukaryota</taxon>
        <taxon>Viridiplantae</taxon>
        <taxon>Streptophyta</taxon>
        <taxon>Embryophyta</taxon>
        <taxon>Tracheophyta</taxon>
        <taxon>Spermatophyta</taxon>
        <taxon>Magnoliopsida</taxon>
        <taxon>eudicotyledons</taxon>
        <taxon>Gunneridae</taxon>
        <taxon>Pentapetalae</taxon>
        <taxon>rosids</taxon>
        <taxon>malvids</taxon>
        <taxon>Brassicales</taxon>
        <taxon>Brassicaceae</taxon>
        <taxon>Camelineae</taxon>
        <taxon>Arabidopsis</taxon>
    </lineage>
</organism>
<comment type="function">
    <text>Probable serine protease.</text>
</comment>
<comment type="subcellular location">
    <subcellularLocation>
        <location evidence="2">Plastid</location>
        <location evidence="2">Chloroplast thylakoid lumen</location>
    </subcellularLocation>
</comment>
<comment type="alternative products">
    <event type="alternative splicing"/>
    <isoform>
        <id>Q9LU10-1</id>
        <name>1</name>
        <sequence type="displayed"/>
    </isoform>
    <text>A number of isoforms are produced. According to EST sequences.</text>
</comment>
<comment type="similarity">
    <text evidence="3">Belongs to the peptidase S1C family.</text>
</comment>
<evidence type="ECO:0000255" key="1"/>
<evidence type="ECO:0000269" key="2">
    <source>
    </source>
</evidence>
<evidence type="ECO:0000305" key="3"/>
<evidence type="ECO:0007829" key="4">
    <source>
        <dbReference type="PDB" id="4IC6"/>
    </source>
</evidence>
<proteinExistence type="evidence at protein level"/>
<feature type="transit peptide" description="Chloroplast" evidence="1">
    <location>
        <begin position="1"/>
        <end status="unknown"/>
    </location>
</feature>
<feature type="transit peptide" description="Thylakoid" evidence="2">
    <location>
        <begin status="unknown"/>
        <end position="90"/>
    </location>
</feature>
<feature type="chain" id="PRO_0000026942" description="Protease Do-like 8, chloroplastic">
    <location>
        <begin position="91"/>
        <end position="448"/>
    </location>
</feature>
<feature type="domain" description="PDZ">
    <location>
        <begin position="336"/>
        <end position="433"/>
    </location>
</feature>
<feature type="region of interest" description="Serine protease">
    <location>
        <begin position="152"/>
        <end position="333"/>
    </location>
</feature>
<feature type="active site" description="Charge relay system" evidence="1">
    <location>
        <position position="171"/>
    </location>
</feature>
<feature type="active site" description="Charge relay system" evidence="1">
    <location>
        <position position="214"/>
    </location>
</feature>
<feature type="active site" description="Charge relay system" evidence="1">
    <location>
        <position position="292"/>
    </location>
</feature>
<feature type="helix" evidence="4">
    <location>
        <begin position="114"/>
        <end position="127"/>
    </location>
</feature>
<feature type="strand" evidence="4">
    <location>
        <begin position="130"/>
        <end position="135"/>
    </location>
</feature>
<feature type="strand" evidence="4">
    <location>
        <begin position="155"/>
        <end position="159"/>
    </location>
</feature>
<feature type="strand" evidence="4">
    <location>
        <begin position="165"/>
        <end position="168"/>
    </location>
</feature>
<feature type="helix" evidence="4">
    <location>
        <begin position="170"/>
        <end position="173"/>
    </location>
</feature>
<feature type="helix" evidence="4">
    <location>
        <begin position="174"/>
        <end position="178"/>
    </location>
</feature>
<feature type="strand" evidence="4">
    <location>
        <begin position="186"/>
        <end position="193"/>
    </location>
</feature>
<feature type="strand" evidence="4">
    <location>
        <begin position="199"/>
        <end position="210"/>
    </location>
</feature>
<feature type="turn" evidence="4">
    <location>
        <begin position="211"/>
        <end position="214"/>
    </location>
</feature>
<feature type="strand" evidence="4">
    <location>
        <begin position="215"/>
        <end position="219"/>
    </location>
</feature>
<feature type="turn" evidence="4">
    <location>
        <begin position="224"/>
        <end position="226"/>
    </location>
</feature>
<feature type="helix" evidence="4">
    <location>
        <begin position="235"/>
        <end position="237"/>
    </location>
</feature>
<feature type="strand" evidence="4">
    <location>
        <begin position="243"/>
        <end position="248"/>
    </location>
</feature>
<feature type="strand" evidence="4">
    <location>
        <begin position="250"/>
        <end position="253"/>
    </location>
</feature>
<feature type="strand" evidence="4">
    <location>
        <begin position="256"/>
        <end position="271"/>
    </location>
</feature>
<feature type="strand" evidence="4">
    <location>
        <begin position="274"/>
        <end position="285"/>
    </location>
</feature>
<feature type="turn" evidence="4">
    <location>
        <begin position="289"/>
        <end position="293"/>
    </location>
</feature>
<feature type="strand" evidence="4">
    <location>
        <begin position="294"/>
        <end position="298"/>
    </location>
</feature>
<feature type="strand" evidence="4">
    <location>
        <begin position="303"/>
        <end position="307"/>
    </location>
</feature>
<feature type="strand" evidence="4">
    <location>
        <begin position="313"/>
        <end position="315"/>
    </location>
</feature>
<feature type="strand" evidence="4">
    <location>
        <begin position="321"/>
        <end position="325"/>
    </location>
</feature>
<feature type="helix" evidence="4">
    <location>
        <begin position="326"/>
        <end position="339"/>
    </location>
</feature>
<feature type="helix" evidence="4">
    <location>
        <begin position="354"/>
        <end position="359"/>
    </location>
</feature>
<feature type="strand" evidence="4">
    <location>
        <begin position="364"/>
        <end position="370"/>
    </location>
</feature>
<feature type="helix" evidence="4">
    <location>
        <begin position="376"/>
        <end position="380"/>
    </location>
</feature>
<feature type="strand" evidence="4">
    <location>
        <begin position="398"/>
        <end position="402"/>
    </location>
</feature>
<feature type="helix" evidence="4">
    <location>
        <begin position="410"/>
        <end position="417"/>
    </location>
</feature>
<feature type="strand" evidence="4">
    <location>
        <begin position="425"/>
        <end position="432"/>
    </location>
</feature>
<feature type="strand" evidence="4">
    <location>
        <begin position="435"/>
        <end position="442"/>
    </location>
</feature>
<sequence>MQVIASFCSKPNENEFVGRRQLLSSVCSKISQGDVVSHPPVSSVKVTQDWKSNLHELAVKSVPSTTRRILLTSLFMNLCFNPSRYLSALALGDPSVATVEDVSPTVFPAGPLFPTEGRIVQLFEKNTYSVVNIFDVTLRPQLKMTGVVEIPEGNGSGVVWDGQGYIVTNYHVIGNALSRNPSPGDVVGRVNILASDGVQKNFEGKLVGADRAKDLAVLKVDAPETLLKPIKVGQSNSLKVGQQCLAIGNPFGFDHTLTVGVISGLNRDIFSQTGVTIGGGIQTDAAINPGNSGGPLLDSKGNLIGINTAIFTQTGTSAGVGFAIPSSTVLKIVPQLIQFSKVLRAGINIELAPDPVANQLNVRNGALVLQVPGKSLAEKAGLHPTSRGFAGNIVLGDIIVAVDDKPVKNKAELMKILDEYSVGDKVTLKIKRGNEDLELKISLEEKSS</sequence>
<protein>
    <recommendedName>
        <fullName>Protease Do-like 8, chloroplastic</fullName>
        <ecNumber>3.4.21.-</ecNumber>
    </recommendedName>
</protein>
<reference key="1">
    <citation type="submission" date="1999-02" db="EMBL/GenBank/DDBJ databases">
        <title>Structural analysis of Arabidopsis thaliana chromosome 5. XI.</title>
        <authorList>
            <person name="Kaneko T."/>
            <person name="Katoh T."/>
            <person name="Asamizu E."/>
            <person name="Sato S."/>
            <person name="Nakamura Y."/>
            <person name="Kotani H."/>
            <person name="Tabata S."/>
        </authorList>
    </citation>
    <scope>NUCLEOTIDE SEQUENCE [LARGE SCALE GENOMIC DNA]</scope>
    <source>
        <strain>cv. Columbia</strain>
    </source>
</reference>
<reference key="2">
    <citation type="journal article" date="2017" name="Plant J.">
        <title>Araport11: a complete reannotation of the Arabidopsis thaliana reference genome.</title>
        <authorList>
            <person name="Cheng C.Y."/>
            <person name="Krishnakumar V."/>
            <person name="Chan A.P."/>
            <person name="Thibaud-Nissen F."/>
            <person name="Schobel S."/>
            <person name="Town C.D."/>
        </authorList>
    </citation>
    <scope>GENOME REANNOTATION</scope>
    <source>
        <strain>cv. Columbia</strain>
    </source>
</reference>
<reference key="3">
    <citation type="journal article" date="2003" name="Science">
        <title>Empirical analysis of transcriptional activity in the Arabidopsis genome.</title>
        <authorList>
            <person name="Yamada K."/>
            <person name="Lim J."/>
            <person name="Dale J.M."/>
            <person name="Chen H."/>
            <person name="Shinn P."/>
            <person name="Palm C.J."/>
            <person name="Southwick A.M."/>
            <person name="Wu H.C."/>
            <person name="Kim C.J."/>
            <person name="Nguyen M."/>
            <person name="Pham P.K."/>
            <person name="Cheuk R.F."/>
            <person name="Karlin-Newmann G."/>
            <person name="Liu S.X."/>
            <person name="Lam B."/>
            <person name="Sakano H."/>
            <person name="Wu T."/>
            <person name="Yu G."/>
            <person name="Miranda M."/>
            <person name="Quach H.L."/>
            <person name="Tripp M."/>
            <person name="Chang C.H."/>
            <person name="Lee J.M."/>
            <person name="Toriumi M.J."/>
            <person name="Chan M.M."/>
            <person name="Tang C.C."/>
            <person name="Onodera C.S."/>
            <person name="Deng J.M."/>
            <person name="Akiyama K."/>
            <person name="Ansari Y."/>
            <person name="Arakawa T."/>
            <person name="Banh J."/>
            <person name="Banno F."/>
            <person name="Bowser L."/>
            <person name="Brooks S.Y."/>
            <person name="Carninci P."/>
            <person name="Chao Q."/>
            <person name="Choy N."/>
            <person name="Enju A."/>
            <person name="Goldsmith A.D."/>
            <person name="Gurjal M."/>
            <person name="Hansen N.F."/>
            <person name="Hayashizaki Y."/>
            <person name="Johnson-Hopson C."/>
            <person name="Hsuan V.W."/>
            <person name="Iida K."/>
            <person name="Karnes M."/>
            <person name="Khan S."/>
            <person name="Koesema E."/>
            <person name="Ishida J."/>
            <person name="Jiang P.X."/>
            <person name="Jones T."/>
            <person name="Kawai J."/>
            <person name="Kamiya A."/>
            <person name="Meyers C."/>
            <person name="Nakajima M."/>
            <person name="Narusaka M."/>
            <person name="Seki M."/>
            <person name="Sakurai T."/>
            <person name="Satou M."/>
            <person name="Tamse R."/>
            <person name="Vaysberg M."/>
            <person name="Wallender E.K."/>
            <person name="Wong C."/>
            <person name="Yamamura Y."/>
            <person name="Yuan S."/>
            <person name="Shinozaki K."/>
            <person name="Davis R.W."/>
            <person name="Theologis A."/>
            <person name="Ecker J.R."/>
        </authorList>
    </citation>
    <scope>NUCLEOTIDE SEQUENCE [LARGE SCALE MRNA]</scope>
    <source>
        <strain>cv. Columbia</strain>
    </source>
</reference>
<reference key="4">
    <citation type="journal article" date="2002" name="J. Biol. Chem.">
        <title>Proteome map of the chloroplast lumen of Arabidopsis thaliana.</title>
        <authorList>
            <person name="Schubert M."/>
            <person name="Petersson U.A."/>
            <person name="Haas B.J."/>
            <person name="Funk C."/>
            <person name="Schroeder W.P."/>
            <person name="Kieselbach T."/>
        </authorList>
    </citation>
    <scope>PROTEIN SEQUENCE OF 91-113</scope>
    <scope>SUBCELLULAR LOCATION</scope>
    <source>
        <strain>cv. Columbia</strain>
    </source>
</reference>
<reference key="5">
    <citation type="journal article" date="2001" name="Plant Physiol.">
        <title>Chloroplast and mitochondrial proteases in Arabidopsis. A proposed nomenclature.</title>
        <authorList>
            <person name="Adam Z."/>
            <person name="Adamska I."/>
            <person name="Nakabayashi K."/>
            <person name="Ostersetzer O."/>
            <person name="Haussuhl K."/>
            <person name="Manuell A."/>
            <person name="Zheng B."/>
            <person name="Vallon O."/>
            <person name="Rodermel S.R."/>
            <person name="Shinozaki K."/>
            <person name="Clarke A.K."/>
        </authorList>
    </citation>
    <scope>GENE FAMILY</scope>
    <scope>NOMENCLATURE</scope>
</reference>
<dbReference type="EC" id="3.4.21.-"/>
<dbReference type="EMBL" id="AB024023">
    <property type="protein sequence ID" value="BAA98101.1"/>
    <property type="molecule type" value="Genomic_DNA"/>
</dbReference>
<dbReference type="EMBL" id="CP002688">
    <property type="protein sequence ID" value="AED94480.1"/>
    <property type="molecule type" value="Genomic_DNA"/>
</dbReference>
<dbReference type="EMBL" id="AY056381">
    <property type="protein sequence ID" value="AAL08237.1"/>
    <property type="molecule type" value="mRNA"/>
</dbReference>
<dbReference type="EMBL" id="AY090319">
    <property type="protein sequence ID" value="AAL90980.1"/>
    <property type="molecule type" value="mRNA"/>
</dbReference>
<dbReference type="RefSeq" id="NP_568575.1">
    <molecule id="Q9LU10-1"/>
    <property type="nucleotide sequence ID" value="NM_123346.5"/>
</dbReference>
<dbReference type="PDB" id="4IC6">
    <property type="method" value="X-ray"/>
    <property type="resolution" value="2.00 A"/>
    <property type="chains" value="A/B/C=91-448"/>
</dbReference>
<dbReference type="PDBsum" id="4IC6"/>
<dbReference type="SMR" id="Q9LU10"/>
<dbReference type="FunCoup" id="Q9LU10">
    <property type="interactions" value="940"/>
</dbReference>
<dbReference type="STRING" id="3702.Q9LU10"/>
<dbReference type="MEROPS" id="S01.474"/>
<dbReference type="iPTMnet" id="Q9LU10"/>
<dbReference type="PaxDb" id="3702-AT5G39830.1"/>
<dbReference type="EnsemblPlants" id="AT5G39830.1">
    <molecule id="Q9LU10-1"/>
    <property type="protein sequence ID" value="AT5G39830.1"/>
    <property type="gene ID" value="AT5G39830"/>
</dbReference>
<dbReference type="GeneID" id="833979"/>
<dbReference type="Gramene" id="AT5G39830.1">
    <molecule id="Q9LU10-1"/>
    <property type="protein sequence ID" value="AT5G39830.1"/>
    <property type="gene ID" value="AT5G39830"/>
</dbReference>
<dbReference type="KEGG" id="ath:AT5G39830"/>
<dbReference type="Araport" id="AT5G39830"/>
<dbReference type="TAIR" id="AT5G39830">
    <property type="gene designation" value="DEG8"/>
</dbReference>
<dbReference type="eggNOG" id="KOG1320">
    <property type="taxonomic scope" value="Eukaryota"/>
</dbReference>
<dbReference type="HOGENOM" id="CLU_020120_2_0_1"/>
<dbReference type="InParanoid" id="Q9LU10"/>
<dbReference type="OMA" id="RRMAIEC"/>
<dbReference type="OrthoDB" id="4217619at2759"/>
<dbReference type="PhylomeDB" id="Q9LU10"/>
<dbReference type="BRENDA" id="3.4.21.107">
    <property type="organism ID" value="399"/>
</dbReference>
<dbReference type="EvolutionaryTrace" id="Q9LU10"/>
<dbReference type="PRO" id="PR:Q9LU10"/>
<dbReference type="Proteomes" id="UP000006548">
    <property type="component" value="Chromosome 5"/>
</dbReference>
<dbReference type="ExpressionAtlas" id="Q9LU10">
    <property type="expression patterns" value="baseline and differential"/>
</dbReference>
<dbReference type="GO" id="GO:0009507">
    <property type="term" value="C:chloroplast"/>
    <property type="evidence" value="ECO:0007005"/>
    <property type="project" value="TAIR"/>
</dbReference>
<dbReference type="GO" id="GO:0009534">
    <property type="term" value="C:chloroplast thylakoid"/>
    <property type="evidence" value="ECO:0007005"/>
    <property type="project" value="TAIR"/>
</dbReference>
<dbReference type="GO" id="GO:0009543">
    <property type="term" value="C:chloroplast thylakoid lumen"/>
    <property type="evidence" value="ECO:0000314"/>
    <property type="project" value="TAIR"/>
</dbReference>
<dbReference type="GO" id="GO:0009536">
    <property type="term" value="C:plastid"/>
    <property type="evidence" value="ECO:0007005"/>
    <property type="project" value="TAIR"/>
</dbReference>
<dbReference type="GO" id="GO:0009579">
    <property type="term" value="C:thylakoid"/>
    <property type="evidence" value="ECO:0007005"/>
    <property type="project" value="TAIR"/>
</dbReference>
<dbReference type="GO" id="GO:0031977">
    <property type="term" value="C:thylakoid lumen"/>
    <property type="evidence" value="ECO:0007005"/>
    <property type="project" value="TAIR"/>
</dbReference>
<dbReference type="GO" id="GO:0008233">
    <property type="term" value="F:peptidase activity"/>
    <property type="evidence" value="ECO:0000314"/>
    <property type="project" value="TAIR"/>
</dbReference>
<dbReference type="GO" id="GO:0004252">
    <property type="term" value="F:serine-type endopeptidase activity"/>
    <property type="evidence" value="ECO:0007669"/>
    <property type="project" value="InterPro"/>
</dbReference>
<dbReference type="GO" id="GO:0010206">
    <property type="term" value="P:photosystem II repair"/>
    <property type="evidence" value="ECO:0000315"/>
    <property type="project" value="TAIR"/>
</dbReference>
<dbReference type="GO" id="GO:0006508">
    <property type="term" value="P:proteolysis"/>
    <property type="evidence" value="ECO:0000314"/>
    <property type="project" value="TAIR"/>
</dbReference>
<dbReference type="CDD" id="cd00990">
    <property type="entry name" value="cpPDZ_AtDEGP1-like"/>
    <property type="match status" value="1"/>
</dbReference>
<dbReference type="FunFam" id="2.40.10.10:FF:000001">
    <property type="entry name" value="Periplasmic serine protease DegS"/>
    <property type="match status" value="1"/>
</dbReference>
<dbReference type="FunFam" id="2.40.10.10:FF:000103">
    <property type="entry name" value="Protease Do-like 1, chloroplastic"/>
    <property type="match status" value="1"/>
</dbReference>
<dbReference type="FunFam" id="2.30.42.10:FF:000331">
    <property type="entry name" value="Protease Do-like 8, chloroplastic"/>
    <property type="match status" value="1"/>
</dbReference>
<dbReference type="Gene3D" id="2.30.42.10">
    <property type="match status" value="1"/>
</dbReference>
<dbReference type="Gene3D" id="2.40.10.10">
    <property type="entry name" value="Trypsin-like serine proteases"/>
    <property type="match status" value="2"/>
</dbReference>
<dbReference type="InterPro" id="IPR051201">
    <property type="entry name" value="Chloro_Bact_Ser_Proteases"/>
</dbReference>
<dbReference type="InterPro" id="IPR039382">
    <property type="entry name" value="DEGP1/8_PDZ_dom"/>
</dbReference>
<dbReference type="InterPro" id="IPR001478">
    <property type="entry name" value="PDZ"/>
</dbReference>
<dbReference type="InterPro" id="IPR036034">
    <property type="entry name" value="PDZ_sf"/>
</dbReference>
<dbReference type="InterPro" id="IPR009003">
    <property type="entry name" value="Peptidase_S1_PA"/>
</dbReference>
<dbReference type="InterPro" id="IPR043504">
    <property type="entry name" value="Peptidase_S1_PA_chymotrypsin"/>
</dbReference>
<dbReference type="InterPro" id="IPR001940">
    <property type="entry name" value="Peptidase_S1C"/>
</dbReference>
<dbReference type="PANTHER" id="PTHR43343">
    <property type="entry name" value="PEPTIDASE S12"/>
    <property type="match status" value="1"/>
</dbReference>
<dbReference type="PANTHER" id="PTHR43343:SF3">
    <property type="entry name" value="PROTEASE DO-LIKE 8, CHLOROPLASTIC"/>
    <property type="match status" value="1"/>
</dbReference>
<dbReference type="Pfam" id="PF13180">
    <property type="entry name" value="PDZ_2"/>
    <property type="match status" value="1"/>
</dbReference>
<dbReference type="Pfam" id="PF13365">
    <property type="entry name" value="Trypsin_2"/>
    <property type="match status" value="1"/>
</dbReference>
<dbReference type="PRINTS" id="PR00834">
    <property type="entry name" value="PROTEASES2C"/>
</dbReference>
<dbReference type="SMART" id="SM00228">
    <property type="entry name" value="PDZ"/>
    <property type="match status" value="1"/>
</dbReference>
<dbReference type="SUPFAM" id="SSF50156">
    <property type="entry name" value="PDZ domain-like"/>
    <property type="match status" value="1"/>
</dbReference>
<dbReference type="SUPFAM" id="SSF50494">
    <property type="entry name" value="Trypsin-like serine proteases"/>
    <property type="match status" value="1"/>
</dbReference>
<keyword id="KW-0002">3D-structure</keyword>
<keyword id="KW-0025">Alternative splicing</keyword>
<keyword id="KW-0150">Chloroplast</keyword>
<keyword id="KW-0903">Direct protein sequencing</keyword>
<keyword id="KW-0378">Hydrolase</keyword>
<keyword id="KW-0934">Plastid</keyword>
<keyword id="KW-0645">Protease</keyword>
<keyword id="KW-1185">Reference proteome</keyword>
<keyword id="KW-0720">Serine protease</keyword>
<keyword id="KW-0793">Thylakoid</keyword>
<keyword id="KW-0809">Transit peptide</keyword>
<gene>
    <name type="primary">DEGP8</name>
    <name type="ordered locus">At5g39830</name>
    <name type="ORF">K13H13.1</name>
</gene>
<accession>Q9LU10</accession>